<proteinExistence type="inferred from homology"/>
<comment type="function">
    <text evidence="1">Involved in the catabolism of homogentisate (2,5-dihydroxyphenylacetate or 2,5-OH-PhAc), a central intermediate in the degradation of phenylalanine and tyrosine. Catalyzes the oxidative ring cleavage of the aromatic ring of homogentisate to yield maleylacetoacetate.</text>
</comment>
<comment type="catalytic activity">
    <reaction evidence="1">
        <text>homogentisate + O2 = 4-maleylacetoacetate + H(+)</text>
        <dbReference type="Rhea" id="RHEA:15449"/>
        <dbReference type="ChEBI" id="CHEBI:15378"/>
        <dbReference type="ChEBI" id="CHEBI:15379"/>
        <dbReference type="ChEBI" id="CHEBI:16169"/>
        <dbReference type="ChEBI" id="CHEBI:17105"/>
        <dbReference type="EC" id="1.13.11.5"/>
    </reaction>
</comment>
<comment type="cofactor">
    <cofactor evidence="1">
        <name>Fe cation</name>
        <dbReference type="ChEBI" id="CHEBI:24875"/>
    </cofactor>
</comment>
<comment type="pathway">
    <text evidence="1">Amino-acid degradation; L-phenylalanine degradation; acetoacetate and fumarate from L-phenylalanine: step 4/6.</text>
</comment>
<comment type="subunit">
    <text evidence="1">Hexamer; dimer of trimers.</text>
</comment>
<comment type="similarity">
    <text evidence="1">Belongs to the homogentisate dioxygenase family.</text>
</comment>
<gene>
    <name evidence="1" type="primary">hmgA</name>
    <name type="ordered locus">BPSL2739</name>
</gene>
<dbReference type="EC" id="1.13.11.5" evidence="1"/>
<dbReference type="EMBL" id="BX571965">
    <property type="protein sequence ID" value="CAH36747.1"/>
    <property type="molecule type" value="Genomic_DNA"/>
</dbReference>
<dbReference type="RefSeq" id="YP_109335.1">
    <property type="nucleotide sequence ID" value="NC_006350.1"/>
</dbReference>
<dbReference type="SMR" id="Q63RD3"/>
<dbReference type="STRING" id="272560.BPSL2739"/>
<dbReference type="KEGG" id="bps:BPSL2739"/>
<dbReference type="PATRIC" id="fig|272560.6.peg.3128"/>
<dbReference type="eggNOG" id="COG3508">
    <property type="taxonomic scope" value="Bacteria"/>
</dbReference>
<dbReference type="UniPathway" id="UPA00139">
    <property type="reaction ID" value="UER00339"/>
</dbReference>
<dbReference type="Proteomes" id="UP000000605">
    <property type="component" value="Chromosome 1"/>
</dbReference>
<dbReference type="GO" id="GO:0005737">
    <property type="term" value="C:cytoplasm"/>
    <property type="evidence" value="ECO:0007669"/>
    <property type="project" value="TreeGrafter"/>
</dbReference>
<dbReference type="GO" id="GO:0004411">
    <property type="term" value="F:homogentisate 1,2-dioxygenase activity"/>
    <property type="evidence" value="ECO:0007669"/>
    <property type="project" value="UniProtKB-UniRule"/>
</dbReference>
<dbReference type="GO" id="GO:0005506">
    <property type="term" value="F:iron ion binding"/>
    <property type="evidence" value="ECO:0007669"/>
    <property type="project" value="UniProtKB-UniRule"/>
</dbReference>
<dbReference type="GO" id="GO:0006559">
    <property type="term" value="P:L-phenylalanine catabolic process"/>
    <property type="evidence" value="ECO:0007669"/>
    <property type="project" value="UniProtKB-UniRule"/>
</dbReference>
<dbReference type="GO" id="GO:0006572">
    <property type="term" value="P:tyrosine catabolic process"/>
    <property type="evidence" value="ECO:0007669"/>
    <property type="project" value="UniProtKB-UniRule"/>
</dbReference>
<dbReference type="CDD" id="cd07000">
    <property type="entry name" value="cupin_HGO_N"/>
    <property type="match status" value="1"/>
</dbReference>
<dbReference type="FunFam" id="2.60.120.10:FF:000034">
    <property type="entry name" value="Homogentisate 1,2-dioxygenase"/>
    <property type="match status" value="1"/>
</dbReference>
<dbReference type="Gene3D" id="2.60.120.10">
    <property type="entry name" value="Jelly Rolls"/>
    <property type="match status" value="1"/>
</dbReference>
<dbReference type="HAMAP" id="MF_00334">
    <property type="entry name" value="Homogentis_dioxygen"/>
    <property type="match status" value="1"/>
</dbReference>
<dbReference type="InterPro" id="IPR046451">
    <property type="entry name" value="HgmA_C"/>
</dbReference>
<dbReference type="InterPro" id="IPR046452">
    <property type="entry name" value="HgmA_N"/>
</dbReference>
<dbReference type="InterPro" id="IPR005708">
    <property type="entry name" value="Homogentis_dOase"/>
</dbReference>
<dbReference type="InterPro" id="IPR022950">
    <property type="entry name" value="Homogentis_dOase_bac"/>
</dbReference>
<dbReference type="InterPro" id="IPR014710">
    <property type="entry name" value="RmlC-like_jellyroll"/>
</dbReference>
<dbReference type="InterPro" id="IPR011051">
    <property type="entry name" value="RmlC_Cupin_sf"/>
</dbReference>
<dbReference type="NCBIfam" id="TIGR01015">
    <property type="entry name" value="hmgA"/>
    <property type="match status" value="1"/>
</dbReference>
<dbReference type="PANTHER" id="PTHR11056">
    <property type="entry name" value="HOMOGENTISATE 1,2-DIOXYGENASE"/>
    <property type="match status" value="1"/>
</dbReference>
<dbReference type="PANTHER" id="PTHR11056:SF0">
    <property type="entry name" value="HOMOGENTISATE 1,2-DIOXYGENASE"/>
    <property type="match status" value="1"/>
</dbReference>
<dbReference type="Pfam" id="PF04209">
    <property type="entry name" value="HgmA_C"/>
    <property type="match status" value="1"/>
</dbReference>
<dbReference type="Pfam" id="PF20510">
    <property type="entry name" value="HgmA_N"/>
    <property type="match status" value="1"/>
</dbReference>
<dbReference type="SUPFAM" id="SSF51182">
    <property type="entry name" value="RmlC-like cupins"/>
    <property type="match status" value="1"/>
</dbReference>
<organism>
    <name type="scientific">Burkholderia pseudomallei (strain K96243)</name>
    <dbReference type="NCBI Taxonomy" id="272560"/>
    <lineage>
        <taxon>Bacteria</taxon>
        <taxon>Pseudomonadati</taxon>
        <taxon>Pseudomonadota</taxon>
        <taxon>Betaproteobacteria</taxon>
        <taxon>Burkholderiales</taxon>
        <taxon>Burkholderiaceae</taxon>
        <taxon>Burkholderia</taxon>
        <taxon>pseudomallei group</taxon>
    </lineage>
</organism>
<protein>
    <recommendedName>
        <fullName evidence="1">Homogentisate 1,2-dioxygenase</fullName>
        <shortName evidence="1">HGDO</shortName>
        <ecNumber evidence="1">1.13.11.5</ecNumber>
    </recommendedName>
    <alternativeName>
        <fullName evidence="1">Homogentisate oxygenase</fullName>
    </alternativeName>
    <alternativeName>
        <fullName evidence="1">Homogentisic acid oxidase</fullName>
    </alternativeName>
    <alternativeName>
        <fullName evidence="1">Homogentisicase</fullName>
    </alternativeName>
</protein>
<keyword id="KW-0223">Dioxygenase</keyword>
<keyword id="KW-0408">Iron</keyword>
<keyword id="KW-0479">Metal-binding</keyword>
<keyword id="KW-0560">Oxidoreductase</keyword>
<keyword id="KW-0585">Phenylalanine catabolism</keyword>
<keyword id="KW-1185">Reference proteome</keyword>
<keyword id="KW-0828">Tyrosine catabolism</keyword>
<feature type="chain" id="PRO_0000225786" description="Homogentisate 1,2-dioxygenase">
    <location>
        <begin position="1"/>
        <end position="450"/>
    </location>
</feature>
<feature type="active site" description="Proton acceptor" evidence="1">
    <location>
        <position position="304"/>
    </location>
</feature>
<feature type="binding site" evidence="1">
    <location>
        <position position="347"/>
    </location>
    <ligand>
        <name>Fe cation</name>
        <dbReference type="ChEBI" id="CHEBI:24875"/>
    </ligand>
</feature>
<feature type="binding site" evidence="1">
    <location>
        <position position="353"/>
    </location>
    <ligand>
        <name>Fe cation</name>
        <dbReference type="ChEBI" id="CHEBI:24875"/>
    </ligand>
</feature>
<feature type="binding site" evidence="1">
    <location>
        <position position="362"/>
    </location>
    <ligand>
        <name>homogentisate</name>
        <dbReference type="ChEBI" id="CHEBI:16169"/>
    </ligand>
</feature>
<feature type="binding site" evidence="1">
    <location>
        <position position="383"/>
    </location>
    <ligand>
        <name>Fe cation</name>
        <dbReference type="ChEBI" id="CHEBI:24875"/>
    </ligand>
</feature>
<feature type="binding site" evidence="1">
    <location>
        <position position="383"/>
    </location>
    <ligand>
        <name>homogentisate</name>
        <dbReference type="ChEBI" id="CHEBI:16169"/>
    </ligand>
</feature>
<accession>Q63RD3</accession>
<sequence length="450" mass="50130">MERTTIMTLDFSKPGEAGYQSGFANEFATEALPGALPHARNSPQRAPYGLYAEQFSGTAFTAPRGHNRRSWLYRIRPAAVHRPFELVSGERRIVAEFGDSDDVPPTPPNQLRWDPLPMPAQPTDFVDGWVTMAGNGSAAAMSGCAIHLYAANRSMRERFFYSADGELLIVPQEGRLFIMTELGRLDVEPFEIAVIPRGVRFAVALPDGRARGYVCENFGALLRLPDLGPIGSNGLANPRDFLTPHASYEDREGAFELVAKLNGRLWRADIDHSPFDVVAWHGNYAPYKYDLRHFNTIGSISYDHPDPSIFLVLQSQSDTPGVDAIDFVIFPPRWLAAEDTFRPPWFHRNVASEFMGLVHGVYDAKAEGFVPGGASLHNCMSGHGPDADTFEKASSIDTSKPNKVGDTMAFMFETRTLIRPTRFALDTAQLQANYFECWQGLKKHFNPEQR</sequence>
<reference key="1">
    <citation type="journal article" date="2004" name="Proc. Natl. Acad. Sci. U.S.A.">
        <title>Genomic plasticity of the causative agent of melioidosis, Burkholderia pseudomallei.</title>
        <authorList>
            <person name="Holden M.T.G."/>
            <person name="Titball R.W."/>
            <person name="Peacock S.J."/>
            <person name="Cerdeno-Tarraga A.-M."/>
            <person name="Atkins T."/>
            <person name="Crossman L.C."/>
            <person name="Pitt T."/>
            <person name="Churcher C."/>
            <person name="Mungall K.L."/>
            <person name="Bentley S.D."/>
            <person name="Sebaihia M."/>
            <person name="Thomson N.R."/>
            <person name="Bason N."/>
            <person name="Beacham I.R."/>
            <person name="Brooks K."/>
            <person name="Brown K.A."/>
            <person name="Brown N.F."/>
            <person name="Challis G.L."/>
            <person name="Cherevach I."/>
            <person name="Chillingworth T."/>
            <person name="Cronin A."/>
            <person name="Crossett B."/>
            <person name="Davis P."/>
            <person name="DeShazer D."/>
            <person name="Feltwell T."/>
            <person name="Fraser A."/>
            <person name="Hance Z."/>
            <person name="Hauser H."/>
            <person name="Holroyd S."/>
            <person name="Jagels K."/>
            <person name="Keith K.E."/>
            <person name="Maddison M."/>
            <person name="Moule S."/>
            <person name="Price C."/>
            <person name="Quail M.A."/>
            <person name="Rabbinowitsch E."/>
            <person name="Rutherford K."/>
            <person name="Sanders M."/>
            <person name="Simmonds M."/>
            <person name="Songsivilai S."/>
            <person name="Stevens K."/>
            <person name="Tumapa S."/>
            <person name="Vesaratchavest M."/>
            <person name="Whitehead S."/>
            <person name="Yeats C."/>
            <person name="Barrell B.G."/>
            <person name="Oyston P.C.F."/>
            <person name="Parkhill J."/>
        </authorList>
    </citation>
    <scope>NUCLEOTIDE SEQUENCE [LARGE SCALE GENOMIC DNA]</scope>
    <source>
        <strain>K96243</strain>
    </source>
</reference>
<name>HGD_BURPS</name>
<evidence type="ECO:0000255" key="1">
    <source>
        <dbReference type="HAMAP-Rule" id="MF_00334"/>
    </source>
</evidence>